<organism>
    <name type="scientific">Sputnik virophage</name>
    <dbReference type="NCBI Taxonomy" id="543939"/>
    <lineage>
        <taxon>Viruses</taxon>
        <taxon>Varidnaviria</taxon>
        <taxon>Bamfordvirae</taxon>
        <taxon>Preplasmiviricota</taxon>
        <taxon>Maveriviricetes</taxon>
        <taxon>Priklausovirales</taxon>
        <taxon>Lavidaviridae</taxon>
        <taxon>Sputnikvirus</taxon>
        <taxon>Mimivirus-dependent virus Sputnik</taxon>
    </lineage>
</organism>
<sequence>MSFNKDEFVAFVNAIAMPIEMKNKIQSYIESLLNELENVKKSKNDLRISLQTSMNDANVLYHRQNNELKQKLNEITDELNEYKYENKKLQKENTSIQQIYVAKFYELNNMNKMYKKMLDLQTQMNELKSKKDIFEEQFMILENEHPTFLEKNQPIISEEEDD</sequence>
<accession>B4YNF1</accession>
<organismHost>
    <name type="scientific">Acanthamoeba polyphaga</name>
    <name type="common">Amoeba</name>
    <dbReference type="NCBI Taxonomy" id="5757"/>
</organismHost>
<feature type="chain" id="PRO_0000369819" description="Uncharacterized protein V11">
    <location>
        <begin position="1"/>
        <end position="162"/>
    </location>
</feature>
<dbReference type="EMBL" id="EU606015">
    <property type="protein sequence ID" value="ACF16995.1"/>
    <property type="molecule type" value="Genomic_DNA"/>
</dbReference>
<dbReference type="RefSeq" id="YP_002122372.1">
    <property type="nucleotide sequence ID" value="NC_011132.1"/>
</dbReference>
<dbReference type="SMR" id="B4YNF1"/>
<dbReference type="GeneID" id="6760337"/>
<dbReference type="KEGG" id="vg:6760337"/>
<dbReference type="OrthoDB" id="36130at10239"/>
<dbReference type="Proteomes" id="UP000001863">
    <property type="component" value="Segment"/>
</dbReference>
<proteinExistence type="predicted"/>
<protein>
    <recommendedName>
        <fullName>Uncharacterized protein V11</fullName>
    </recommendedName>
</protein>
<name>V11_SPTNK</name>
<keyword id="KW-1185">Reference proteome</keyword>
<reference key="1">
    <citation type="journal article" date="2008" name="Nature">
        <title>The virophage as a unique parasite of the giant mimivirus.</title>
        <authorList>
            <person name="La Scola B."/>
            <person name="Desnues C."/>
            <person name="Pagnier I."/>
            <person name="Robert C."/>
            <person name="Barrassi L."/>
            <person name="Fournous G."/>
            <person name="Merchat M."/>
            <person name="Suzan-Monti M."/>
            <person name="Forterre P."/>
            <person name="Koonin E."/>
            <person name="Raoult D."/>
        </authorList>
    </citation>
    <scope>NUCLEOTIDE SEQUENCE [GENOMIC DNA]</scope>
</reference>